<evidence type="ECO:0000250" key="1">
    <source>
        <dbReference type="UniProtKB" id="P02652"/>
    </source>
</evidence>
<evidence type="ECO:0000255" key="2"/>
<evidence type="ECO:0000305" key="3"/>
<proteinExistence type="evidence at transcript level"/>
<organism>
    <name type="scientific">Panthera tigris altaica</name>
    <name type="common">Siberian tiger</name>
    <dbReference type="NCBI Taxonomy" id="74533"/>
    <lineage>
        <taxon>Eukaryota</taxon>
        <taxon>Metazoa</taxon>
        <taxon>Chordata</taxon>
        <taxon>Craniata</taxon>
        <taxon>Vertebrata</taxon>
        <taxon>Euteleostomi</taxon>
        <taxon>Mammalia</taxon>
        <taxon>Eutheria</taxon>
        <taxon>Laurasiatheria</taxon>
        <taxon>Carnivora</taxon>
        <taxon>Feliformia</taxon>
        <taxon>Felidae</taxon>
        <taxon>Pantherinae</taxon>
        <taxon>Panthera</taxon>
    </lineage>
</organism>
<dbReference type="EMBL" id="ATCQ01118607">
    <property type="status" value="NOT_ANNOTATED_CDS"/>
    <property type="molecule type" value="Genomic_DNA"/>
</dbReference>
<dbReference type="RefSeq" id="XP_007093078.1">
    <property type="nucleotide sequence ID" value="XM_007093016.2"/>
</dbReference>
<dbReference type="RefSeq" id="XP_015397908.1">
    <property type="nucleotide sequence ID" value="XM_015542422.1"/>
</dbReference>
<dbReference type="SMR" id="P0DM96"/>
<dbReference type="Ensembl" id="ENSPTIT00000027839.1">
    <property type="protein sequence ID" value="ENSPTIP00000023384.1"/>
    <property type="gene ID" value="ENSPTIG00000019862.1"/>
</dbReference>
<dbReference type="GeneID" id="102957835"/>
<dbReference type="KEGG" id="ptg:102957835"/>
<dbReference type="CTD" id="336"/>
<dbReference type="GeneTree" id="ENSGT00390000003306"/>
<dbReference type="Proteomes" id="UP000675900">
    <property type="component" value="Unassembled WGS sequence"/>
</dbReference>
<dbReference type="GO" id="GO:0034366">
    <property type="term" value="C:spherical high-density lipoprotein particle"/>
    <property type="evidence" value="ECO:0007669"/>
    <property type="project" value="TreeGrafter"/>
</dbReference>
<dbReference type="GO" id="GO:0120020">
    <property type="term" value="F:cholesterol transfer activity"/>
    <property type="evidence" value="ECO:0007669"/>
    <property type="project" value="TreeGrafter"/>
</dbReference>
<dbReference type="GO" id="GO:0008035">
    <property type="term" value="F:high-density lipoprotein particle binding"/>
    <property type="evidence" value="ECO:0007669"/>
    <property type="project" value="TreeGrafter"/>
</dbReference>
<dbReference type="GO" id="GO:0008289">
    <property type="term" value="F:lipid binding"/>
    <property type="evidence" value="ECO:0007669"/>
    <property type="project" value="InterPro"/>
</dbReference>
<dbReference type="GO" id="GO:0042632">
    <property type="term" value="P:cholesterol homeostasis"/>
    <property type="evidence" value="ECO:0007669"/>
    <property type="project" value="TreeGrafter"/>
</dbReference>
<dbReference type="GO" id="GO:0030301">
    <property type="term" value="P:cholesterol transport"/>
    <property type="evidence" value="ECO:0007669"/>
    <property type="project" value="TreeGrafter"/>
</dbReference>
<dbReference type="GO" id="GO:0042157">
    <property type="term" value="P:lipoprotein metabolic process"/>
    <property type="evidence" value="ECO:0007669"/>
    <property type="project" value="InterPro"/>
</dbReference>
<dbReference type="GO" id="GO:0050766">
    <property type="term" value="P:positive regulation of phagocytosis"/>
    <property type="evidence" value="ECO:0000250"/>
    <property type="project" value="UniProtKB"/>
</dbReference>
<dbReference type="GO" id="GO:0050821">
    <property type="term" value="P:protein stabilization"/>
    <property type="evidence" value="ECO:0000250"/>
    <property type="project" value="UniProtKB"/>
</dbReference>
<dbReference type="Gene3D" id="6.10.250.100">
    <property type="match status" value="1"/>
</dbReference>
<dbReference type="InterPro" id="IPR006801">
    <property type="entry name" value="ApoA-II"/>
</dbReference>
<dbReference type="InterPro" id="IPR036172">
    <property type="entry name" value="ApoA-II_sf"/>
</dbReference>
<dbReference type="PANTHER" id="PTHR11027">
    <property type="entry name" value="APOLIPOPROTEIN A-II"/>
    <property type="match status" value="1"/>
</dbReference>
<dbReference type="PANTHER" id="PTHR11027:SF0">
    <property type="entry name" value="APOLIPOPROTEIN A-II"/>
    <property type="match status" value="1"/>
</dbReference>
<dbReference type="Pfam" id="PF04711">
    <property type="entry name" value="ApoA-II"/>
    <property type="match status" value="1"/>
</dbReference>
<dbReference type="SUPFAM" id="SSF82936">
    <property type="entry name" value="Apolipoprotein A-II"/>
    <property type="match status" value="1"/>
</dbReference>
<name>APOA2_PANTA</name>
<comment type="function">
    <text>May stabilize HDL (high density lipoprotein) structure by its association with lipids, and affect the HDL metabolism.</text>
</comment>
<comment type="subunit">
    <text evidence="1">Monomer. Interacts with NAXE and NDRG1 (By similarity).</text>
</comment>
<comment type="subcellular location">
    <subcellularLocation>
        <location evidence="1">Secreted</location>
    </subcellularLocation>
</comment>
<comment type="tissue specificity">
    <text>Plasma.</text>
</comment>
<comment type="similarity">
    <text evidence="3">Belongs to the apolipoprotein A2 family.</text>
</comment>
<feature type="signal peptide" evidence="2">
    <location>
        <begin position="1"/>
        <end position="18"/>
    </location>
</feature>
<feature type="chain" id="PRO_0000425357" description="Proapolipoprotein A-II">
    <location>
        <begin position="19"/>
        <end position="100"/>
    </location>
</feature>
<feature type="chain" id="PRO_0000424684" description="Apolipoprotein A-II" evidence="1">
    <location>
        <begin position="24"/>
        <end position="100"/>
    </location>
</feature>
<feature type="chain" id="PRO_0000424751" description="Truncated apolipoprotein A-II" evidence="1">
    <location>
        <begin position="24"/>
        <end position="99"/>
    </location>
</feature>
<protein>
    <recommendedName>
        <fullName>Apolipoprotein A-II</fullName>
        <shortName>Apo-AII</shortName>
        <shortName>ApoA-II</shortName>
    </recommendedName>
    <alternativeName>
        <fullName>Apolipoprotein A2</fullName>
    </alternativeName>
    <component>
        <recommendedName>
            <fullName>Proapolipoprotein A-II</fullName>
            <shortName>ProapoA-II</shortName>
        </recommendedName>
    </component>
    <component>
        <recommendedName>
            <fullName>Truncated apolipoprotein A-II</fullName>
        </recommendedName>
    </component>
</protein>
<keyword id="KW-0165">Cleavage on pair of basic residues</keyword>
<keyword id="KW-0345">HDL</keyword>
<keyword id="KW-0445">Lipid transport</keyword>
<keyword id="KW-1185">Reference proteome</keyword>
<keyword id="KW-0964">Secreted</keyword>
<keyword id="KW-0732">Signal</keyword>
<keyword id="KW-0813">Transport</keyword>
<reference key="1">
    <citation type="journal article" date="2013" name="Nat. Commun.">
        <title>The tiger genome and comparative analysis with lion and snow leopard genomes.</title>
        <authorList>
            <person name="Cho Y.S."/>
            <person name="Hu L."/>
            <person name="Hou H."/>
            <person name="Lee H."/>
            <person name="Xu J."/>
            <person name="Kwon S."/>
            <person name="Oh S."/>
            <person name="Kim H.M."/>
            <person name="Jho S."/>
            <person name="Kim S."/>
            <person name="Shin Y.A."/>
            <person name="Kim B.C."/>
            <person name="Kim H."/>
            <person name="Kim C.U."/>
            <person name="Luo S.J."/>
            <person name="Johnson W.E."/>
            <person name="Koepfli K.P."/>
            <person name="Schmidt-Kuntzel A."/>
            <person name="Turner J.A."/>
            <person name="Marker L."/>
            <person name="Harper C."/>
            <person name="Miller S.M."/>
            <person name="Jacobs W."/>
            <person name="Bertola L.D."/>
            <person name="Kim T.H."/>
            <person name="Lee S."/>
            <person name="Zhou Q."/>
            <person name="Jung H.J."/>
            <person name="Xu X."/>
            <person name="Gadhvi P."/>
            <person name="Xu P."/>
            <person name="Xiong Y."/>
            <person name="Luo Y."/>
            <person name="Pan S."/>
            <person name="Gou C."/>
            <person name="Chu X."/>
            <person name="Zhang J."/>
            <person name="Liu S."/>
            <person name="He J."/>
            <person name="Chen Y."/>
            <person name="Yang L."/>
            <person name="Yang Y."/>
            <person name="He J."/>
            <person name="Liu S."/>
            <person name="Wang J."/>
            <person name="Kim C.H."/>
            <person name="Kwak H."/>
            <person name="Kim J.S."/>
            <person name="Hwang S."/>
            <person name="Ko J."/>
            <person name="Kim C.B."/>
            <person name="Kim S."/>
            <person name="Bayarlkhagva D."/>
            <person name="Paek W.K."/>
            <person name="Kim S.J."/>
            <person name="O'Brien S.J."/>
            <person name="Wang J."/>
            <person name="Bhak J."/>
        </authorList>
    </citation>
    <scope>NUCLEOTIDE SEQUENCE [LARGE SCALE GENOMIC DNA]</scope>
</reference>
<reference key="2">
    <citation type="unpublished observations" date="2013-10">
        <authorList>
            <person name="Puppione D.L."/>
        </authorList>
    </citation>
    <scope>IDENTIFICATION</scope>
</reference>
<sequence length="100" mass="11248">MKLLAMTVLLLTICSLEGALVRRQAEELSLQRLVSQYFQTVTDYGKDLVEKAKGPELQAQAKAYFEKTQEQLTPLVKKAGTDLINFLNNFMDLKAQPATQ</sequence>
<accession>P0DM96</accession>
<gene>
    <name type="primary">APOA2</name>
</gene>